<organism>
    <name type="scientific">Nasalis larvatus</name>
    <name type="common">Proboscis monkey</name>
    <dbReference type="NCBI Taxonomy" id="43780"/>
    <lineage>
        <taxon>Eukaryota</taxon>
        <taxon>Metazoa</taxon>
        <taxon>Chordata</taxon>
        <taxon>Craniata</taxon>
        <taxon>Vertebrata</taxon>
        <taxon>Euteleostomi</taxon>
        <taxon>Mammalia</taxon>
        <taxon>Eutheria</taxon>
        <taxon>Euarchontoglires</taxon>
        <taxon>Primates</taxon>
        <taxon>Haplorrhini</taxon>
        <taxon>Catarrhini</taxon>
        <taxon>Cercopithecidae</taxon>
        <taxon>Colobinae</taxon>
        <taxon>Nasalis</taxon>
    </lineage>
</organism>
<accession>Q95NC7</accession>
<keyword id="KW-1003">Cell membrane</keyword>
<keyword id="KW-1015">Disulfide bond</keyword>
<keyword id="KW-0297">G-protein coupled receptor</keyword>
<keyword id="KW-0325">Glycoprotein</keyword>
<keyword id="KW-0449">Lipoprotein</keyword>
<keyword id="KW-0472">Membrane</keyword>
<keyword id="KW-0564">Palmitate</keyword>
<keyword id="KW-0597">Phosphoprotein</keyword>
<keyword id="KW-0675">Receptor</keyword>
<keyword id="KW-0765">Sulfation</keyword>
<keyword id="KW-0807">Transducer</keyword>
<keyword id="KW-0812">Transmembrane</keyword>
<keyword id="KW-1133">Transmembrane helix</keyword>
<dbReference type="EMBL" id="AF177882">
    <property type="protein sequence ID" value="AAK43365.1"/>
    <property type="molecule type" value="Genomic_DNA"/>
</dbReference>
<dbReference type="SMR" id="Q95NC7"/>
<dbReference type="GlyCosmos" id="Q95NC7">
    <property type="glycosylation" value="2 sites, No reported glycans"/>
</dbReference>
<dbReference type="GO" id="GO:0005737">
    <property type="term" value="C:cytoplasm"/>
    <property type="evidence" value="ECO:0007669"/>
    <property type="project" value="TreeGrafter"/>
</dbReference>
<dbReference type="GO" id="GO:0009897">
    <property type="term" value="C:external side of plasma membrane"/>
    <property type="evidence" value="ECO:0000250"/>
    <property type="project" value="UniProtKB"/>
</dbReference>
<dbReference type="GO" id="GO:0016493">
    <property type="term" value="F:C-C chemokine receptor activity"/>
    <property type="evidence" value="ECO:0000250"/>
    <property type="project" value="UniProtKB"/>
</dbReference>
<dbReference type="GO" id="GO:0071791">
    <property type="term" value="F:chemokine (C-C motif) ligand 5 binding"/>
    <property type="evidence" value="ECO:0007669"/>
    <property type="project" value="TreeGrafter"/>
</dbReference>
<dbReference type="GO" id="GO:0019722">
    <property type="term" value="P:calcium-mediated signaling"/>
    <property type="evidence" value="ECO:0007669"/>
    <property type="project" value="TreeGrafter"/>
</dbReference>
<dbReference type="GO" id="GO:0060326">
    <property type="term" value="P:cell chemotaxis"/>
    <property type="evidence" value="ECO:0007669"/>
    <property type="project" value="TreeGrafter"/>
</dbReference>
<dbReference type="GO" id="GO:0006955">
    <property type="term" value="P:immune response"/>
    <property type="evidence" value="ECO:0007669"/>
    <property type="project" value="InterPro"/>
</dbReference>
<dbReference type="GO" id="GO:0006954">
    <property type="term" value="P:inflammatory response"/>
    <property type="evidence" value="ECO:0007669"/>
    <property type="project" value="InterPro"/>
</dbReference>
<dbReference type="GO" id="GO:0007204">
    <property type="term" value="P:positive regulation of cytosolic calcium ion concentration"/>
    <property type="evidence" value="ECO:0007669"/>
    <property type="project" value="TreeGrafter"/>
</dbReference>
<dbReference type="CDD" id="cd15184">
    <property type="entry name" value="7tmA_CCR5_CCR2"/>
    <property type="match status" value="1"/>
</dbReference>
<dbReference type="FunFam" id="1.20.1070.10:FF:000026">
    <property type="entry name" value="C-C chemokine receptor type 5"/>
    <property type="match status" value="1"/>
</dbReference>
<dbReference type="Gene3D" id="1.20.1070.10">
    <property type="entry name" value="Rhodopsin 7-helix transmembrane proteins"/>
    <property type="match status" value="1"/>
</dbReference>
<dbReference type="InterPro" id="IPR050119">
    <property type="entry name" value="CCR1-9-like"/>
</dbReference>
<dbReference type="InterPro" id="IPR002240">
    <property type="entry name" value="Chemokine_CCR5"/>
</dbReference>
<dbReference type="InterPro" id="IPR000355">
    <property type="entry name" value="Chemokine_rcpt"/>
</dbReference>
<dbReference type="InterPro" id="IPR000276">
    <property type="entry name" value="GPCR_Rhodpsn"/>
</dbReference>
<dbReference type="InterPro" id="IPR017452">
    <property type="entry name" value="GPCR_Rhodpsn_7TM"/>
</dbReference>
<dbReference type="PANTHER" id="PTHR10489:SF686">
    <property type="entry name" value="C-C CHEMOKINE RECEPTOR TYPE 5"/>
    <property type="match status" value="1"/>
</dbReference>
<dbReference type="PANTHER" id="PTHR10489">
    <property type="entry name" value="CELL ADHESION MOLECULE"/>
    <property type="match status" value="1"/>
</dbReference>
<dbReference type="Pfam" id="PF00001">
    <property type="entry name" value="7tm_1"/>
    <property type="match status" value="1"/>
</dbReference>
<dbReference type="PRINTS" id="PR00657">
    <property type="entry name" value="CCCHEMOKINER"/>
</dbReference>
<dbReference type="PRINTS" id="PR01110">
    <property type="entry name" value="CHEMOKINER5"/>
</dbReference>
<dbReference type="PRINTS" id="PR00237">
    <property type="entry name" value="GPCRRHODOPSN"/>
</dbReference>
<dbReference type="SUPFAM" id="SSF81321">
    <property type="entry name" value="Family A G protein-coupled receptor-like"/>
    <property type="match status" value="1"/>
</dbReference>
<dbReference type="PROSITE" id="PS00237">
    <property type="entry name" value="G_PROTEIN_RECEP_F1_1"/>
    <property type="match status" value="1"/>
</dbReference>
<dbReference type="PROSITE" id="PS50262">
    <property type="entry name" value="G_PROTEIN_RECEP_F1_2"/>
    <property type="match status" value="1"/>
</dbReference>
<protein>
    <recommendedName>
        <fullName>C-C chemokine receptor type 5</fullName>
        <shortName>C-C CKR-5</shortName>
        <shortName>CC-CKR-5</shortName>
        <shortName>CCR-5</shortName>
        <shortName>CCR5</shortName>
    </recommendedName>
    <cdAntigenName>CD195</cdAntigenName>
</protein>
<feature type="chain" id="PRO_0000069270" description="C-C chemokine receptor type 5">
    <location>
        <begin position="1"/>
        <end position="352"/>
    </location>
</feature>
<feature type="topological domain" description="Extracellular" evidence="3">
    <location>
        <begin position="1"/>
        <end position="30"/>
    </location>
</feature>
<feature type="transmembrane region" description="Helical; Name=1" evidence="3">
    <location>
        <begin position="31"/>
        <end position="58"/>
    </location>
</feature>
<feature type="topological domain" description="Cytoplasmic" evidence="3">
    <location>
        <begin position="59"/>
        <end position="68"/>
    </location>
</feature>
<feature type="transmembrane region" description="Helical; Name=2" evidence="3">
    <location>
        <begin position="69"/>
        <end position="89"/>
    </location>
</feature>
<feature type="topological domain" description="Extracellular" evidence="3">
    <location>
        <begin position="90"/>
        <end position="102"/>
    </location>
</feature>
<feature type="transmembrane region" description="Helical; Name=3" evidence="3">
    <location>
        <begin position="103"/>
        <end position="124"/>
    </location>
</feature>
<feature type="topological domain" description="Cytoplasmic" evidence="3">
    <location>
        <begin position="125"/>
        <end position="141"/>
    </location>
</feature>
<feature type="transmembrane region" description="Helical; Name=4" evidence="3">
    <location>
        <begin position="142"/>
        <end position="166"/>
    </location>
</feature>
<feature type="topological domain" description="Extracellular" evidence="3">
    <location>
        <begin position="167"/>
        <end position="198"/>
    </location>
</feature>
<feature type="transmembrane region" description="Helical; Name=5" evidence="3">
    <location>
        <begin position="199"/>
        <end position="218"/>
    </location>
</feature>
<feature type="topological domain" description="Cytoplasmic" evidence="3">
    <location>
        <begin position="219"/>
        <end position="235"/>
    </location>
</feature>
<feature type="transmembrane region" description="Helical; Name=6" evidence="3">
    <location>
        <begin position="236"/>
        <end position="260"/>
    </location>
</feature>
<feature type="topological domain" description="Extracellular" evidence="3">
    <location>
        <begin position="261"/>
        <end position="277"/>
    </location>
</feature>
<feature type="transmembrane region" description="Helical; Name=7" evidence="3">
    <location>
        <begin position="278"/>
        <end position="301"/>
    </location>
</feature>
<feature type="topological domain" description="Cytoplasmic" evidence="3">
    <location>
        <begin position="302"/>
        <end position="352"/>
    </location>
</feature>
<feature type="modified residue" description="Sulfotyrosine" evidence="1">
    <location>
        <position position="3"/>
    </location>
</feature>
<feature type="modified residue" description="Sulfotyrosine" evidence="3">
    <location>
        <position position="10"/>
    </location>
</feature>
<feature type="modified residue" description="Sulfotyrosine" evidence="3">
    <location>
        <position position="14"/>
    </location>
</feature>
<feature type="modified residue" description="Sulfotyrosine" evidence="3">
    <location>
        <position position="15"/>
    </location>
</feature>
<feature type="modified residue" description="Phosphoserine; by BARK1" evidence="1">
    <location>
        <position position="336"/>
    </location>
</feature>
<feature type="modified residue" description="Phosphoserine; by BARK1" evidence="1">
    <location>
        <position position="337"/>
    </location>
</feature>
<feature type="modified residue" description="Phosphoserine; by BARK1" evidence="1">
    <location>
        <position position="342"/>
    </location>
</feature>
<feature type="modified residue" description="Phosphoserine; by BARK1" evidence="1">
    <location>
        <position position="349"/>
    </location>
</feature>
<feature type="lipid moiety-binding region" description="S-palmitoyl cysteine" evidence="1">
    <location>
        <position position="321"/>
    </location>
</feature>
<feature type="lipid moiety-binding region" description="S-palmitoyl cysteine" evidence="1">
    <location>
        <position position="323"/>
    </location>
</feature>
<feature type="lipid moiety-binding region" description="S-palmitoyl cysteine" evidence="1">
    <location>
        <position position="324"/>
    </location>
</feature>
<feature type="glycosylation site" description="O-linked (GalNAc...) serine" evidence="1">
    <location>
        <position position="6"/>
    </location>
</feature>
<feature type="glycosylation site" description="O-linked (GalNAc...) serine" evidence="1">
    <location>
        <position position="7"/>
    </location>
</feature>
<feature type="disulfide bond" evidence="1">
    <location>
        <begin position="20"/>
        <end position="269"/>
    </location>
</feature>
<feature type="disulfide bond" evidence="4">
    <location>
        <begin position="101"/>
        <end position="178"/>
    </location>
</feature>
<reference key="1">
    <citation type="journal article" date="1999" name="Mol. Biol. Evol.">
        <title>Sequence evolution of the CCR5 chemokine receptor gene in primates.</title>
        <authorList>
            <person name="Zhang Y.-W."/>
            <person name="Ryder O.A."/>
            <person name="Zhang Y.-P."/>
        </authorList>
    </citation>
    <scope>NUCLEOTIDE SEQUENCE [GENOMIC DNA]</scope>
</reference>
<sequence>MDYQVSSPTYDIDYYTSEPCQKVNVKQIAARLLPPLYSLVFIFGFVGNILVVLILINCKRLKSMTDIYLLNLAISDLFFLLTVPFWAHYAAARWDFGNTMCQLLTGLYFIGFFSGIFFIILLTIDRYLAIVHAVFALKARTVTFGVVTSVITWVVAVFASLPGIIFTRSQREGLHYTCSSHFPYSQYQFWKNFQTLKIVILGLVLPLLVMVICYSGILKTLLRCRNEKKRHRAVRLIFTIMIVYFLFWAPYNIVLLLNTFQEFFGLNNCSSSNRLDQAMQVTETLGMTHCCINPIIYAFVGEKFRNYLLVFFQKHIAKRFCKCCSIFQQEAPERASSVYTRSTGEQEISVGL</sequence>
<gene>
    <name type="primary">CCR5</name>
    <name type="synonym">CMKBR5</name>
</gene>
<evidence type="ECO:0000250" key="1">
    <source>
        <dbReference type="UniProtKB" id="P51681"/>
    </source>
</evidence>
<evidence type="ECO:0000250" key="2">
    <source>
        <dbReference type="UniProtKB" id="Q9XT76"/>
    </source>
</evidence>
<evidence type="ECO:0000255" key="3"/>
<evidence type="ECO:0000255" key="4">
    <source>
        <dbReference type="PROSITE-ProRule" id="PRU00521"/>
    </source>
</evidence>
<name>CCR5_NASLA</name>
<proteinExistence type="inferred from homology"/>
<comment type="function">
    <text evidence="1">Receptor for a number of inflammatory CC-chemokines including CCL3/MIP-1-alpha, CCL4/MIP-1-beta and RANTES and subsequently transduces a signal by increasing the intracellular calcium ion level. May play a role in the control of granulocytic lineage proliferation or differentiation. Participates in T-lymphocyte migration to the infection site by acting as a chemotactic receptor.</text>
</comment>
<comment type="subunit">
    <text evidence="1">Interacts with PRAF2. Efficient ligand binding to CCL3/MIP-1alpha and CCL4/MIP-1beta requires sulfation, O-glycosylation and sialic acid modifications. Glycosylation on Ser-6 is required for efficient binding of CCL4. Interacts with GRK2. Interacts with ARRB1 and ARRB2. Interacts with CNIH4. Interacts with S100A4; this interaction stimulates T-lymphocyte chemotaxis.</text>
</comment>
<comment type="subcellular location">
    <subcellularLocation>
        <location evidence="2">Cell membrane</location>
        <topology evidence="2">Multi-pass membrane protein</topology>
    </subcellularLocation>
</comment>
<comment type="PTM">
    <text evidence="1">Sulfated on at least 2 of the N-terminal tyrosines. Sulfation is required for efficient binding of the chemokines, CCL3 and CCL4 (By similarity).</text>
</comment>
<comment type="PTM">
    <text evidence="1">Palmitoylation in the C-terminal is important for cell surface expression.</text>
</comment>
<comment type="PTM">
    <text evidence="1">Phosphorylation on serine residues in the C-terminal is stimulated by binding CC chemokines especially by APO-RANTES.</text>
</comment>
<comment type="PTM">
    <text evidence="1">O-glycosylated, but not N-glycosylated. Ser-6 appears to be the major site even if Ser-7 may be also O-glycosylated. Also sialylated glycans present which contribute to chemokine binding. Thr-16 and Ser-17 may also be glycosylated and, if so, with small moieties such as a T-antigen.</text>
</comment>
<comment type="similarity">
    <text evidence="4">Belongs to the G-protein coupled receptor 1 family.</text>
</comment>